<name>HUTH_YERPE</name>
<protein>
    <recommendedName>
        <fullName evidence="1">Histidine ammonia-lyase</fullName>
        <shortName evidence="1">Histidase</shortName>
        <ecNumber evidence="1">4.3.1.3</ecNumber>
    </recommendedName>
</protein>
<keyword id="KW-0963">Cytoplasm</keyword>
<keyword id="KW-0369">Histidine metabolism</keyword>
<keyword id="KW-0456">Lyase</keyword>
<keyword id="KW-1185">Reference proteome</keyword>
<evidence type="ECO:0000255" key="1">
    <source>
        <dbReference type="HAMAP-Rule" id="MF_00229"/>
    </source>
</evidence>
<reference key="1">
    <citation type="journal article" date="2001" name="Nature">
        <title>Genome sequence of Yersinia pestis, the causative agent of plague.</title>
        <authorList>
            <person name="Parkhill J."/>
            <person name="Wren B.W."/>
            <person name="Thomson N.R."/>
            <person name="Titball R.W."/>
            <person name="Holden M.T.G."/>
            <person name="Prentice M.B."/>
            <person name="Sebaihia M."/>
            <person name="James K.D."/>
            <person name="Churcher C.M."/>
            <person name="Mungall K.L."/>
            <person name="Baker S."/>
            <person name="Basham D."/>
            <person name="Bentley S.D."/>
            <person name="Brooks K."/>
            <person name="Cerdeno-Tarraga A.-M."/>
            <person name="Chillingworth T."/>
            <person name="Cronin A."/>
            <person name="Davies R.M."/>
            <person name="Davis P."/>
            <person name="Dougan G."/>
            <person name="Feltwell T."/>
            <person name="Hamlin N."/>
            <person name="Holroyd S."/>
            <person name="Jagels K."/>
            <person name="Karlyshev A.V."/>
            <person name="Leather S."/>
            <person name="Moule S."/>
            <person name="Oyston P.C.F."/>
            <person name="Quail M.A."/>
            <person name="Rutherford K.M."/>
            <person name="Simmonds M."/>
            <person name="Skelton J."/>
            <person name="Stevens K."/>
            <person name="Whitehead S."/>
            <person name="Barrell B.G."/>
        </authorList>
    </citation>
    <scope>NUCLEOTIDE SEQUENCE [LARGE SCALE GENOMIC DNA]</scope>
    <source>
        <strain>CO-92 / Biovar Orientalis</strain>
    </source>
</reference>
<reference key="2">
    <citation type="journal article" date="2002" name="J. Bacteriol.">
        <title>Genome sequence of Yersinia pestis KIM.</title>
        <authorList>
            <person name="Deng W."/>
            <person name="Burland V."/>
            <person name="Plunkett G. III"/>
            <person name="Boutin A."/>
            <person name="Mayhew G.F."/>
            <person name="Liss P."/>
            <person name="Perna N.T."/>
            <person name="Rose D.J."/>
            <person name="Mau B."/>
            <person name="Zhou S."/>
            <person name="Schwartz D.C."/>
            <person name="Fetherston J.D."/>
            <person name="Lindler L.E."/>
            <person name="Brubaker R.R."/>
            <person name="Plano G.V."/>
            <person name="Straley S.C."/>
            <person name="McDonough K.A."/>
            <person name="Nilles M.L."/>
            <person name="Matson J.S."/>
            <person name="Blattner F.R."/>
            <person name="Perry R.D."/>
        </authorList>
    </citation>
    <scope>NUCLEOTIDE SEQUENCE [LARGE SCALE GENOMIC DNA]</scope>
    <source>
        <strain>KIM10+ / Biovar Mediaevalis</strain>
    </source>
</reference>
<reference key="3">
    <citation type="journal article" date="2004" name="DNA Res.">
        <title>Complete genome sequence of Yersinia pestis strain 91001, an isolate avirulent to humans.</title>
        <authorList>
            <person name="Song Y."/>
            <person name="Tong Z."/>
            <person name="Wang J."/>
            <person name="Wang L."/>
            <person name="Guo Z."/>
            <person name="Han Y."/>
            <person name="Zhang J."/>
            <person name="Pei D."/>
            <person name="Zhou D."/>
            <person name="Qin H."/>
            <person name="Pang X."/>
            <person name="Han Y."/>
            <person name="Zhai J."/>
            <person name="Li M."/>
            <person name="Cui B."/>
            <person name="Qi Z."/>
            <person name="Jin L."/>
            <person name="Dai R."/>
            <person name="Chen F."/>
            <person name="Li S."/>
            <person name="Ye C."/>
            <person name="Du Z."/>
            <person name="Lin W."/>
            <person name="Wang J."/>
            <person name="Yu J."/>
            <person name="Yang H."/>
            <person name="Wang J."/>
            <person name="Huang P."/>
            <person name="Yang R."/>
        </authorList>
    </citation>
    <scope>NUCLEOTIDE SEQUENCE [LARGE SCALE GENOMIC DNA]</scope>
    <source>
        <strain>91001 / Biovar Mediaevalis</strain>
    </source>
</reference>
<accession>Q8ZA10</accession>
<accession>Q0WA06</accession>
<organism>
    <name type="scientific">Yersinia pestis</name>
    <dbReference type="NCBI Taxonomy" id="632"/>
    <lineage>
        <taxon>Bacteria</taxon>
        <taxon>Pseudomonadati</taxon>
        <taxon>Pseudomonadota</taxon>
        <taxon>Gammaproteobacteria</taxon>
        <taxon>Enterobacterales</taxon>
        <taxon>Yersiniaceae</taxon>
        <taxon>Yersinia</taxon>
    </lineage>
</organism>
<sequence>MKTITLRPGQMTLADLRHIYQHPVHITLDESAYVPIQQSVDCVQAILAEQRTAYGINTGFGLLASTRIATEDLENLQRSIVLSHAAGVGEANDDAIVRLIMVLKINSLARGFSGIRLEVIQALITLVNAGVYPHIPLKGSVGASGDLAPLAHMSLLLLGEGKARYQGEWLPAHTALAQAGLQPLTLAAKEGLALLNGTQVSAAYALRGLFEAEDLYAAASVFGCLTVDAALGSRSPFDARIHAVRGQRGQIDAASTYRHLLGERSEISESHKNCDKVQDPYSLRCQPQVMGACLGQIRQAAEVLAIESNAVSDNPLVFAEQGDVLSGGNFHAEPVAMAADNLALALAEVGSLSECRISLMMDKHMSQLPPFLVENGGVNSGFMIAQVTAAALTSENKGLAFPASVDSIPTSANQEDHVSMAPRAGKRLWEMAENVRNILAIEWLAACQGLDLRKGLRTSAILEPARQLLRQHVTYYDKDRFFAPDIEVASQLIAQRHMNELMPAKLLPSL</sequence>
<comment type="catalytic activity">
    <reaction evidence="1">
        <text>L-histidine = trans-urocanate + NH4(+)</text>
        <dbReference type="Rhea" id="RHEA:21232"/>
        <dbReference type="ChEBI" id="CHEBI:17771"/>
        <dbReference type="ChEBI" id="CHEBI:28938"/>
        <dbReference type="ChEBI" id="CHEBI:57595"/>
        <dbReference type="EC" id="4.3.1.3"/>
    </reaction>
</comment>
<comment type="pathway">
    <text evidence="1">Amino-acid degradation; L-histidine degradation into L-glutamate; N-formimidoyl-L-glutamate from L-histidine: step 1/3.</text>
</comment>
<comment type="subcellular location">
    <subcellularLocation>
        <location evidence="1">Cytoplasm</location>
    </subcellularLocation>
</comment>
<comment type="PTM">
    <text evidence="1">Contains an active site 4-methylidene-imidazol-5-one (MIO), which is formed autocatalytically by cyclization and dehydration of residues Ala-Ser-Gly.</text>
</comment>
<comment type="similarity">
    <text evidence="1">Belongs to the PAL/histidase family.</text>
</comment>
<proteinExistence type="inferred from homology"/>
<feature type="chain" id="PRO_0000161053" description="Histidine ammonia-lyase">
    <location>
        <begin position="1"/>
        <end position="510"/>
    </location>
</feature>
<feature type="modified residue" description="2,3-didehydroalanine (Ser)" evidence="1">
    <location>
        <position position="144"/>
    </location>
</feature>
<feature type="cross-link" description="5-imidazolinone (Ala-Gly)" evidence="1">
    <location>
        <begin position="143"/>
        <end position="145"/>
    </location>
</feature>
<dbReference type="EC" id="4.3.1.3" evidence="1"/>
<dbReference type="EMBL" id="AL590842">
    <property type="protein sequence ID" value="CAL22594.1"/>
    <property type="molecule type" value="Genomic_DNA"/>
</dbReference>
<dbReference type="EMBL" id="AE009952">
    <property type="protein sequence ID" value="AAM87581.1"/>
    <property type="molecule type" value="Genomic_DNA"/>
</dbReference>
<dbReference type="EMBL" id="AE017042">
    <property type="protein sequence ID" value="AAS63542.1"/>
    <property type="molecule type" value="Genomic_DNA"/>
</dbReference>
<dbReference type="PIR" id="AG0488">
    <property type="entry name" value="AG0488"/>
</dbReference>
<dbReference type="RefSeq" id="WP_002209575.1">
    <property type="nucleotide sequence ID" value="NZ_WUCM01000040.1"/>
</dbReference>
<dbReference type="RefSeq" id="YP_002348882.1">
    <property type="nucleotide sequence ID" value="NC_003143.1"/>
</dbReference>
<dbReference type="SMR" id="Q8ZA10"/>
<dbReference type="IntAct" id="Q8ZA10">
    <property type="interactions" value="1"/>
</dbReference>
<dbReference type="STRING" id="214092.YPO4016"/>
<dbReference type="PaxDb" id="214092-YPO4016"/>
<dbReference type="DNASU" id="1148984"/>
<dbReference type="EnsemblBacteria" id="AAS63542">
    <property type="protein sequence ID" value="AAS63542"/>
    <property type="gene ID" value="YP_3379"/>
</dbReference>
<dbReference type="GeneID" id="57974695"/>
<dbReference type="KEGG" id="ype:YPO4016"/>
<dbReference type="KEGG" id="ypk:y4037"/>
<dbReference type="KEGG" id="ypm:YP_3379"/>
<dbReference type="PATRIC" id="fig|214092.21.peg.4551"/>
<dbReference type="eggNOG" id="COG2986">
    <property type="taxonomic scope" value="Bacteria"/>
</dbReference>
<dbReference type="HOGENOM" id="CLU_014801_4_0_6"/>
<dbReference type="OMA" id="YSLRCMP"/>
<dbReference type="OrthoDB" id="9806955at2"/>
<dbReference type="UniPathway" id="UPA00379">
    <property type="reaction ID" value="UER00549"/>
</dbReference>
<dbReference type="Proteomes" id="UP000000815">
    <property type="component" value="Chromosome"/>
</dbReference>
<dbReference type="Proteomes" id="UP000001019">
    <property type="component" value="Chromosome"/>
</dbReference>
<dbReference type="Proteomes" id="UP000002490">
    <property type="component" value="Chromosome"/>
</dbReference>
<dbReference type="GO" id="GO:0005737">
    <property type="term" value="C:cytoplasm"/>
    <property type="evidence" value="ECO:0007669"/>
    <property type="project" value="UniProtKB-SubCell"/>
</dbReference>
<dbReference type="GO" id="GO:0004397">
    <property type="term" value="F:histidine ammonia-lyase activity"/>
    <property type="evidence" value="ECO:0000318"/>
    <property type="project" value="GO_Central"/>
</dbReference>
<dbReference type="GO" id="GO:0006548">
    <property type="term" value="P:L-histidine catabolic process"/>
    <property type="evidence" value="ECO:0000318"/>
    <property type="project" value="GO_Central"/>
</dbReference>
<dbReference type="GO" id="GO:0019556">
    <property type="term" value="P:L-histidine catabolic process to glutamate and formamide"/>
    <property type="evidence" value="ECO:0007669"/>
    <property type="project" value="UniProtKB-UniPathway"/>
</dbReference>
<dbReference type="GO" id="GO:0019557">
    <property type="term" value="P:L-histidine catabolic process to glutamate and formate"/>
    <property type="evidence" value="ECO:0007669"/>
    <property type="project" value="UniProtKB-UniPathway"/>
</dbReference>
<dbReference type="CDD" id="cd00332">
    <property type="entry name" value="PAL-HAL"/>
    <property type="match status" value="1"/>
</dbReference>
<dbReference type="FunFam" id="1.10.275.10:FF:000005">
    <property type="entry name" value="Histidine ammonia-lyase"/>
    <property type="match status" value="1"/>
</dbReference>
<dbReference type="FunFam" id="1.20.200.10:FF:000003">
    <property type="entry name" value="Histidine ammonia-lyase"/>
    <property type="match status" value="1"/>
</dbReference>
<dbReference type="Gene3D" id="1.20.200.10">
    <property type="entry name" value="Fumarase/aspartase (Central domain)"/>
    <property type="match status" value="1"/>
</dbReference>
<dbReference type="Gene3D" id="1.10.275.10">
    <property type="entry name" value="Fumarase/aspartase (N-terminal domain)"/>
    <property type="match status" value="1"/>
</dbReference>
<dbReference type="HAMAP" id="MF_00229">
    <property type="entry name" value="His_ammonia_lyase"/>
    <property type="match status" value="1"/>
</dbReference>
<dbReference type="InterPro" id="IPR001106">
    <property type="entry name" value="Aromatic_Lyase"/>
</dbReference>
<dbReference type="InterPro" id="IPR024083">
    <property type="entry name" value="Fumarase/histidase_N"/>
</dbReference>
<dbReference type="InterPro" id="IPR005921">
    <property type="entry name" value="HutH"/>
</dbReference>
<dbReference type="InterPro" id="IPR008948">
    <property type="entry name" value="L-Aspartase-like"/>
</dbReference>
<dbReference type="InterPro" id="IPR022313">
    <property type="entry name" value="Phe/His_NH3-lyase_AS"/>
</dbReference>
<dbReference type="NCBIfam" id="TIGR01225">
    <property type="entry name" value="hutH"/>
    <property type="match status" value="1"/>
</dbReference>
<dbReference type="NCBIfam" id="NF006871">
    <property type="entry name" value="PRK09367.1"/>
    <property type="match status" value="1"/>
</dbReference>
<dbReference type="PANTHER" id="PTHR10362">
    <property type="entry name" value="HISTIDINE AMMONIA-LYASE"/>
    <property type="match status" value="1"/>
</dbReference>
<dbReference type="Pfam" id="PF00221">
    <property type="entry name" value="Lyase_aromatic"/>
    <property type="match status" value="1"/>
</dbReference>
<dbReference type="SUPFAM" id="SSF48557">
    <property type="entry name" value="L-aspartase-like"/>
    <property type="match status" value="1"/>
</dbReference>
<dbReference type="PROSITE" id="PS00488">
    <property type="entry name" value="PAL_HISTIDASE"/>
    <property type="match status" value="1"/>
</dbReference>
<gene>
    <name evidence="1" type="primary">hutH</name>
    <name type="ordered locus">YPO4016</name>
    <name type="ordered locus">y4037</name>
    <name type="ordered locus">YP_3379</name>
</gene>